<protein>
    <recommendedName>
        <fullName>NADH dehydrogenase [ubiquinone] iron-sulfur protein 1, mitochondrial</fullName>
        <ecNumber>7.1.1.2</ecNumber>
    </recommendedName>
    <alternativeName>
        <fullName>76 kDa mitochondrial complex I subunit</fullName>
    </alternativeName>
    <alternativeName>
        <fullName>Complex I-76kD</fullName>
        <shortName>CI-76kD</shortName>
    </alternativeName>
    <alternativeName>
        <fullName>NADH-ubiquinone oxidoreductase 76 kDa subunit</fullName>
    </alternativeName>
</protein>
<comment type="function">
    <text evidence="1">Core subunit of the mitochondrial membrane respiratory chain NADH dehydrogenase (Complex I) that is believed to belong to the minimal assembly required for catalysis. Complex I functions in the transfer of electrons from NADH to the respiratory chain. The immediate electron acceptor for the enzyme is believed to be ubiquinone (By similarity). This is the largest subunit of complex I and it is a component of the iron-sulfur (IP) fragment of the enzyme. It may form part of the active site crevice where NADH is oxidized (By similarity).</text>
</comment>
<comment type="catalytic activity">
    <reaction>
        <text>a ubiquinone + NADH + 5 H(+)(in) = a ubiquinol + NAD(+) + 4 H(+)(out)</text>
        <dbReference type="Rhea" id="RHEA:29091"/>
        <dbReference type="Rhea" id="RHEA-COMP:9565"/>
        <dbReference type="Rhea" id="RHEA-COMP:9566"/>
        <dbReference type="ChEBI" id="CHEBI:15378"/>
        <dbReference type="ChEBI" id="CHEBI:16389"/>
        <dbReference type="ChEBI" id="CHEBI:17976"/>
        <dbReference type="ChEBI" id="CHEBI:57540"/>
        <dbReference type="ChEBI" id="CHEBI:57945"/>
        <dbReference type="EC" id="7.1.1.2"/>
    </reaction>
</comment>
<comment type="cofactor">
    <cofactor evidence="1">
        <name>[2Fe-2S] cluster</name>
        <dbReference type="ChEBI" id="CHEBI:190135"/>
    </cofactor>
    <text evidence="1">Binds 1 [2Fe-2S] cluster per subunit.</text>
</comment>
<comment type="cofactor">
    <cofactor evidence="1">
        <name>[4Fe-4S] cluster</name>
        <dbReference type="ChEBI" id="CHEBI:49883"/>
    </cofactor>
    <text evidence="1">Binds 2 [4Fe-4S] clusters per subunit.</text>
</comment>
<comment type="subunit">
    <text evidence="1">Complex I is composed of about 45 different subunits. This is a component of the iron-sulfur (IP) fragment of the enzyme (By similarity).</text>
</comment>
<comment type="subcellular location">
    <subcellularLocation>
        <location evidence="1">Mitochondrion inner membrane</location>
    </subcellularLocation>
    <text evidence="1">Matrix and cytoplasmic side of the mitochondrial inner membrane.</text>
</comment>
<comment type="similarity">
    <text evidence="5">Belongs to the complex I 75 kDa subunit family.</text>
</comment>
<name>NDUS1_SOLTU</name>
<reference key="1">
    <citation type="journal article" date="1998" name="Plant Cell Physiol.">
        <title>Molecular characterisation of the 76 kDa iron-sulphur protein subunit of potato mitochondrial complex I.</title>
        <authorList>
            <person name="Rasmusson A.G."/>
            <person name="Heiser V."/>
            <person name="Irrgang K.D."/>
            <person name="Brennicke A."/>
            <person name="Grohmann L."/>
        </authorList>
    </citation>
    <scope>NUCLEOTIDE SEQUENCE [MRNA]</scope>
    <source>
        <strain>cv. Desiree</strain>
        <tissue>Leaf</tissue>
    </source>
</reference>
<dbReference type="EC" id="7.1.1.2"/>
<dbReference type="EMBL" id="X85808">
    <property type="protein sequence ID" value="CAA59818.1"/>
    <property type="molecule type" value="mRNA"/>
</dbReference>
<dbReference type="PIR" id="S52737">
    <property type="entry name" value="S52737"/>
</dbReference>
<dbReference type="RefSeq" id="NP_001275317.1">
    <property type="nucleotide sequence ID" value="NM_001288388.1"/>
</dbReference>
<dbReference type="SMR" id="Q43644"/>
<dbReference type="FunCoup" id="Q43644">
    <property type="interactions" value="2658"/>
</dbReference>
<dbReference type="IntAct" id="Q43644">
    <property type="interactions" value="1"/>
</dbReference>
<dbReference type="STRING" id="4113.Q43644"/>
<dbReference type="CarbonylDB" id="Q43644"/>
<dbReference type="PaxDb" id="4113-PGSC0003DMT400034638"/>
<dbReference type="ProMEX" id="Q43644"/>
<dbReference type="GeneID" id="102594243"/>
<dbReference type="KEGG" id="sot:102594243"/>
<dbReference type="eggNOG" id="KOG2282">
    <property type="taxonomic scope" value="Eukaryota"/>
</dbReference>
<dbReference type="InParanoid" id="Q43644"/>
<dbReference type="OrthoDB" id="10249365at2759"/>
<dbReference type="Proteomes" id="UP000011115">
    <property type="component" value="Unassembled WGS sequence"/>
</dbReference>
<dbReference type="ExpressionAtlas" id="Q43644">
    <property type="expression patterns" value="baseline"/>
</dbReference>
<dbReference type="GO" id="GO:0005743">
    <property type="term" value="C:mitochondrial inner membrane"/>
    <property type="evidence" value="ECO:0007669"/>
    <property type="project" value="UniProtKB-SubCell"/>
</dbReference>
<dbReference type="GO" id="GO:0051537">
    <property type="term" value="F:2 iron, 2 sulfur cluster binding"/>
    <property type="evidence" value="ECO:0007669"/>
    <property type="project" value="UniProtKB-KW"/>
</dbReference>
<dbReference type="GO" id="GO:0051539">
    <property type="term" value="F:4 iron, 4 sulfur cluster binding"/>
    <property type="evidence" value="ECO:0007669"/>
    <property type="project" value="UniProtKB-KW"/>
</dbReference>
<dbReference type="GO" id="GO:0046872">
    <property type="term" value="F:metal ion binding"/>
    <property type="evidence" value="ECO:0007669"/>
    <property type="project" value="UniProtKB-KW"/>
</dbReference>
<dbReference type="GO" id="GO:0008137">
    <property type="term" value="F:NADH dehydrogenase (ubiquinone) activity"/>
    <property type="evidence" value="ECO:0007669"/>
    <property type="project" value="UniProtKB-EC"/>
</dbReference>
<dbReference type="GO" id="GO:0042773">
    <property type="term" value="P:ATP synthesis coupled electron transport"/>
    <property type="evidence" value="ECO:0007669"/>
    <property type="project" value="InterPro"/>
</dbReference>
<dbReference type="CDD" id="cd00207">
    <property type="entry name" value="fer2"/>
    <property type="match status" value="1"/>
</dbReference>
<dbReference type="CDD" id="cd02773">
    <property type="entry name" value="MopB_Res-Cmplx1_Nad11"/>
    <property type="match status" value="1"/>
</dbReference>
<dbReference type="FunFam" id="3.40.50.740:FF:000012">
    <property type="entry name" value="NADH dehydrogenase [ubiquinone] iron-sulfur protein 1 mitochondrial"/>
    <property type="match status" value="1"/>
</dbReference>
<dbReference type="FunFam" id="3.40.228.10:FF:000014">
    <property type="entry name" value="NADH-quinone oxidoreductase"/>
    <property type="match status" value="1"/>
</dbReference>
<dbReference type="FunFam" id="3.40.50.740:FF:000017">
    <property type="entry name" value="NADH-quinone oxidoreductase"/>
    <property type="match status" value="1"/>
</dbReference>
<dbReference type="FunFam" id="3.10.20.740:FF:000001">
    <property type="entry name" value="NADH-quinone oxidoreductase subunit G"/>
    <property type="match status" value="1"/>
</dbReference>
<dbReference type="FunFam" id="3.30.200.210:FF:000002">
    <property type="entry name" value="NADH-ubiquinone oxidoreductase 75 kDa subunit"/>
    <property type="match status" value="1"/>
</dbReference>
<dbReference type="FunFam" id="3.30.70.20:FF:000002">
    <property type="entry name" value="NADH-ubiquinone oxidoreductase 75 kDa subunit"/>
    <property type="match status" value="1"/>
</dbReference>
<dbReference type="Gene3D" id="3.10.20.740">
    <property type="match status" value="1"/>
</dbReference>
<dbReference type="Gene3D" id="3.30.70.20">
    <property type="match status" value="1"/>
</dbReference>
<dbReference type="Gene3D" id="3.40.50.740">
    <property type="match status" value="2"/>
</dbReference>
<dbReference type="Gene3D" id="3.40.228.10">
    <property type="entry name" value="Dimethylsulfoxide Reductase, domain 2"/>
    <property type="match status" value="1"/>
</dbReference>
<dbReference type="InterPro" id="IPR036010">
    <property type="entry name" value="2Fe-2S_ferredoxin-like_sf"/>
</dbReference>
<dbReference type="InterPro" id="IPR001041">
    <property type="entry name" value="2Fe-2S_ferredoxin-type"/>
</dbReference>
<dbReference type="InterPro" id="IPR006656">
    <property type="entry name" value="Mopterin_OxRdtase"/>
</dbReference>
<dbReference type="InterPro" id="IPR006963">
    <property type="entry name" value="Mopterin_OxRdtase_4Fe-4S_dom"/>
</dbReference>
<dbReference type="InterPro" id="IPR000283">
    <property type="entry name" value="NADH_UbQ_OxRdtase_75kDa_su_CS"/>
</dbReference>
<dbReference type="InterPro" id="IPR054351">
    <property type="entry name" value="NADH_UbQ_OxRdtase_ferredoxin"/>
</dbReference>
<dbReference type="InterPro" id="IPR010228">
    <property type="entry name" value="NADH_UbQ_OxRdtase_Gsu"/>
</dbReference>
<dbReference type="InterPro" id="IPR019574">
    <property type="entry name" value="NADH_UbQ_OxRdtase_Gsu_4Fe4S-bd"/>
</dbReference>
<dbReference type="InterPro" id="IPR015405">
    <property type="entry name" value="NDUFS1-like_C"/>
</dbReference>
<dbReference type="InterPro" id="IPR050123">
    <property type="entry name" value="Prok_molybdopt-oxidoreductase"/>
</dbReference>
<dbReference type="NCBIfam" id="TIGR01973">
    <property type="entry name" value="NuoG"/>
    <property type="match status" value="1"/>
</dbReference>
<dbReference type="PANTHER" id="PTHR43105:SF13">
    <property type="entry name" value="NADH-UBIQUINONE OXIDOREDUCTASE 75 KDA SUBUNIT, MITOCHONDRIAL"/>
    <property type="match status" value="1"/>
</dbReference>
<dbReference type="PANTHER" id="PTHR43105">
    <property type="entry name" value="RESPIRATORY NITRATE REDUCTASE"/>
    <property type="match status" value="1"/>
</dbReference>
<dbReference type="Pfam" id="PF13510">
    <property type="entry name" value="Fer2_4"/>
    <property type="match status" value="1"/>
</dbReference>
<dbReference type="Pfam" id="PF22151">
    <property type="entry name" value="Fer4_NDSU1"/>
    <property type="match status" value="1"/>
</dbReference>
<dbReference type="Pfam" id="PF22117">
    <property type="entry name" value="Fer4_Nqo3"/>
    <property type="match status" value="1"/>
</dbReference>
<dbReference type="Pfam" id="PF00384">
    <property type="entry name" value="Molybdopterin"/>
    <property type="match status" value="1"/>
</dbReference>
<dbReference type="Pfam" id="PF10588">
    <property type="entry name" value="NADH-G_4Fe-4S_3"/>
    <property type="match status" value="1"/>
</dbReference>
<dbReference type="Pfam" id="PF09326">
    <property type="entry name" value="NADH_dhqG_C"/>
    <property type="match status" value="1"/>
</dbReference>
<dbReference type="SMART" id="SM00929">
    <property type="entry name" value="NADH-G_4Fe-4S_3"/>
    <property type="match status" value="1"/>
</dbReference>
<dbReference type="SUPFAM" id="SSF54292">
    <property type="entry name" value="2Fe-2S ferredoxin-like"/>
    <property type="match status" value="1"/>
</dbReference>
<dbReference type="SUPFAM" id="SSF54862">
    <property type="entry name" value="4Fe-4S ferredoxins"/>
    <property type="match status" value="1"/>
</dbReference>
<dbReference type="SUPFAM" id="SSF53706">
    <property type="entry name" value="Formate dehydrogenase/DMSO reductase, domains 1-3"/>
    <property type="match status" value="1"/>
</dbReference>
<dbReference type="PROSITE" id="PS51085">
    <property type="entry name" value="2FE2S_FER_2"/>
    <property type="match status" value="1"/>
</dbReference>
<dbReference type="PROSITE" id="PS51839">
    <property type="entry name" value="4FE4S_HC3"/>
    <property type="match status" value="1"/>
</dbReference>
<dbReference type="PROSITE" id="PS51669">
    <property type="entry name" value="4FE4S_MOW_BIS_MGD"/>
    <property type="match status" value="1"/>
</dbReference>
<dbReference type="PROSITE" id="PS00641">
    <property type="entry name" value="COMPLEX1_75K_1"/>
    <property type="match status" value="1"/>
</dbReference>
<dbReference type="PROSITE" id="PS00642">
    <property type="entry name" value="COMPLEX1_75K_2"/>
    <property type="match status" value="1"/>
</dbReference>
<dbReference type="PROSITE" id="PS00643">
    <property type="entry name" value="COMPLEX1_75K_3"/>
    <property type="match status" value="1"/>
</dbReference>
<accession>Q43644</accession>
<feature type="transit peptide" description="Mitochondrion" evidence="1">
    <location>
        <begin position="1"/>
        <end position="27"/>
    </location>
</feature>
<feature type="chain" id="PRO_0000019973" description="NADH dehydrogenase [ubiquinone] iron-sulfur protein 1, mitochondrial">
    <location>
        <begin position="28"/>
        <end position="738"/>
    </location>
</feature>
<feature type="domain" description="2Fe-2S ferredoxin-type" evidence="2">
    <location>
        <begin position="66"/>
        <end position="144"/>
    </location>
</feature>
<feature type="domain" description="4Fe-4S His(Cys)3-ligated-type" evidence="4">
    <location>
        <begin position="144"/>
        <end position="183"/>
    </location>
</feature>
<feature type="domain" description="4Fe-4S Mo/W bis-MGD-type" evidence="3">
    <location>
        <begin position="281"/>
        <end position="337"/>
    </location>
</feature>
<feature type="binding site" evidence="1">
    <location>
        <position position="100"/>
    </location>
    <ligand>
        <name>[2Fe-2S] cluster</name>
        <dbReference type="ChEBI" id="CHEBI:190135"/>
    </ligand>
</feature>
<feature type="binding site" evidence="1">
    <location>
        <position position="111"/>
    </location>
    <ligand>
        <name>[2Fe-2S] cluster</name>
        <dbReference type="ChEBI" id="CHEBI:190135"/>
    </ligand>
</feature>
<feature type="binding site" evidence="1">
    <location>
        <position position="114"/>
    </location>
    <ligand>
        <name>[2Fe-2S] cluster</name>
        <dbReference type="ChEBI" id="CHEBI:190135"/>
    </ligand>
</feature>
<feature type="binding site" evidence="1">
    <location>
        <position position="128"/>
    </location>
    <ligand>
        <name>[2Fe-2S] cluster</name>
        <dbReference type="ChEBI" id="CHEBI:190135"/>
    </ligand>
</feature>
<feature type="binding site" evidence="4">
    <location>
        <position position="160"/>
    </location>
    <ligand>
        <name>[4Fe-4S] cluster</name>
        <dbReference type="ChEBI" id="CHEBI:49883"/>
        <label>1</label>
    </ligand>
</feature>
<feature type="binding site" evidence="4">
    <location>
        <position position="164"/>
    </location>
    <ligand>
        <name>[4Fe-4S] cluster</name>
        <dbReference type="ChEBI" id="CHEBI:49883"/>
        <label>1</label>
    </ligand>
</feature>
<feature type="binding site" evidence="4">
    <location>
        <position position="167"/>
    </location>
    <ligand>
        <name>[4Fe-4S] cluster</name>
        <dbReference type="ChEBI" id="CHEBI:49883"/>
        <label>1</label>
    </ligand>
</feature>
<feature type="binding site" evidence="4">
    <location>
        <position position="173"/>
    </location>
    <ligand>
        <name>[4Fe-4S] cluster</name>
        <dbReference type="ChEBI" id="CHEBI:49883"/>
        <label>1</label>
    </ligand>
</feature>
<feature type="binding site" evidence="1">
    <location>
        <position position="212"/>
    </location>
    <ligand>
        <name>[4Fe-4S] cluster</name>
        <dbReference type="ChEBI" id="CHEBI:49883"/>
        <label>2</label>
    </ligand>
</feature>
<feature type="binding site" evidence="1">
    <location>
        <position position="215"/>
    </location>
    <ligand>
        <name>[4Fe-4S] cluster</name>
        <dbReference type="ChEBI" id="CHEBI:49883"/>
        <label>2</label>
    </ligand>
</feature>
<feature type="binding site" evidence="1">
    <location>
        <position position="218"/>
    </location>
    <ligand>
        <name>[4Fe-4S] cluster</name>
        <dbReference type="ChEBI" id="CHEBI:49883"/>
        <label>2</label>
    </ligand>
</feature>
<feature type="binding site" evidence="1">
    <location>
        <position position="262"/>
    </location>
    <ligand>
        <name>[4Fe-4S] cluster</name>
        <dbReference type="ChEBI" id="CHEBI:49883"/>
        <label>2</label>
    </ligand>
</feature>
<sequence>MGLGLLASRALRSSRIIRNSTRTIVSTPELKNADAAAAAAAADAPSDLPKRHPVGGARVHLPNPEDVIEVFVDGYPVKIPKGMTVLQACEIAGVDIPRFCYHSRLSIAGNCRMCLVEVEKSPKPVASCAMPALPGMKIKTDTPIAKKAREGVMEFLLMNHPLDCPICDQGGECDLQDQSMAFGSDRGRFTEMKRSVVDKNLGPLVKTVMTRCIQCTRCVRFASEVAGVEDLGMLGRGSGEEIGTYVEKLMTSELSGNVIDICPVGALTSKPFAFKARNWELKGTESIDVTDAVGSNIRIDSRGPEVMRVVPRLNEDINEEWISDKTRFFYDGLKRQRLNDPMIRGADGRFQAVSWRDALAIVAEVMHQIKPEEIVGVAGKLSDAESMMALKDLLNKMGSNNIFCEGNGMHPNADLRSGYIMNTSISGLEKADAFLLVGTQPRVEAAMVNARIHKTVKATNAKVGYVGPAADFNYDHEHLGTDPQTLVEIAEGRHPFSSALKNAKNPVIIVGAGVFDRDDKDAVFAAVDTIAKNNNVVRPDWNGLNVLLLNAAQVAALDLGLVPESDKCIESAKFVYLMGADDVNLDKLPDDAFVVYQGHHGDRGVYRANVILPASAFTEKEGIYENTEGCAQITLPAVPTVGDARDDWKIVRALSEVAGVGLPYDSLGAIRSRIKTVAPNLLEVDERQPATFSTSLRPEVSQKVSATPFTPAVENFYMTDAITRASKIMAQCSALLKK</sequence>
<proteinExistence type="evidence at transcript level"/>
<evidence type="ECO:0000250" key="1"/>
<evidence type="ECO:0000255" key="2">
    <source>
        <dbReference type="PROSITE-ProRule" id="PRU00465"/>
    </source>
</evidence>
<evidence type="ECO:0000255" key="3">
    <source>
        <dbReference type="PROSITE-ProRule" id="PRU01004"/>
    </source>
</evidence>
<evidence type="ECO:0000255" key="4">
    <source>
        <dbReference type="PROSITE-ProRule" id="PRU01184"/>
    </source>
</evidence>
<evidence type="ECO:0000305" key="5"/>
<keyword id="KW-0001">2Fe-2S</keyword>
<keyword id="KW-0004">4Fe-4S</keyword>
<keyword id="KW-0249">Electron transport</keyword>
<keyword id="KW-0408">Iron</keyword>
<keyword id="KW-0411">Iron-sulfur</keyword>
<keyword id="KW-0472">Membrane</keyword>
<keyword id="KW-0479">Metal-binding</keyword>
<keyword id="KW-0496">Mitochondrion</keyword>
<keyword id="KW-0999">Mitochondrion inner membrane</keyword>
<keyword id="KW-0520">NAD</keyword>
<keyword id="KW-0560">Oxidoreductase</keyword>
<keyword id="KW-1185">Reference proteome</keyword>
<keyword id="KW-0679">Respiratory chain</keyword>
<keyword id="KW-0809">Transit peptide</keyword>
<keyword id="KW-1278">Translocase</keyword>
<keyword id="KW-0813">Transport</keyword>
<keyword id="KW-0830">Ubiquinone</keyword>
<organism>
    <name type="scientific">Solanum tuberosum</name>
    <name type="common">Potato</name>
    <dbReference type="NCBI Taxonomy" id="4113"/>
    <lineage>
        <taxon>Eukaryota</taxon>
        <taxon>Viridiplantae</taxon>
        <taxon>Streptophyta</taxon>
        <taxon>Embryophyta</taxon>
        <taxon>Tracheophyta</taxon>
        <taxon>Spermatophyta</taxon>
        <taxon>Magnoliopsida</taxon>
        <taxon>eudicotyledons</taxon>
        <taxon>Gunneridae</taxon>
        <taxon>Pentapetalae</taxon>
        <taxon>asterids</taxon>
        <taxon>lamiids</taxon>
        <taxon>Solanales</taxon>
        <taxon>Solanaceae</taxon>
        <taxon>Solanoideae</taxon>
        <taxon>Solaneae</taxon>
        <taxon>Solanum</taxon>
    </lineage>
</organism>